<organismHost>
    <name type="scientific">Homo sapiens</name>
    <name type="common">Human</name>
    <dbReference type="NCBI Taxonomy" id="9606"/>
</organismHost>
<name>VE2_HPV60</name>
<sequence length="404" mass="46535">MNQADLTERSDALQEQILNLYEQDSKDIQAQIQYWDLNRKLYVTYYYARKEGYSHLGLQPLPALQVSEYKAKQAIEMGLLLTSLSKSQYASELWGLTDTSAELLLTPPRNTFKKKGYTVNVWFDNNENNTFPYTNWEYIYYQDDIEQWHRTRGEVDYNGLYFTENNGNRAYFLLFDSDAQTYSQTGTWTVHYKNQIISAPVTSSSKQSSDDYTSKAGQQPHFFASSSSPTTTDGGQTSQEGVSSSTTSPSAVRLRRRRSNEQQRELSSRESPRTKRRRVPDEVDRQSAVGSAPTAEEVGSRHRSLPRSGISRLARLQGEARDPPILLIKGLANSLKCWRYRLKKYTRYFKCMSTVFRWVDIDVPESSRHKLLVVFNDTTQRDVFMKLVTLPRGCTYTFGTLNSL</sequence>
<accession>Q80944</accession>
<proteinExistence type="inferred from homology"/>
<organism>
    <name type="scientific">Human papillomavirus type 60</name>
    <dbReference type="NCBI Taxonomy" id="40540"/>
    <lineage>
        <taxon>Viruses</taxon>
        <taxon>Monodnaviria</taxon>
        <taxon>Shotokuvirae</taxon>
        <taxon>Cossaviricota</taxon>
        <taxon>Papovaviricetes</taxon>
        <taxon>Zurhausenvirales</taxon>
        <taxon>Papillomaviridae</taxon>
        <taxon>Firstpapillomavirinae</taxon>
        <taxon>Gammapapillomavirus</taxon>
        <taxon>Gammapapillomavirus 4</taxon>
    </lineage>
</organism>
<dbReference type="EMBL" id="U31792">
    <property type="protein sequence ID" value="AAA79488.1"/>
    <property type="molecule type" value="Genomic_DNA"/>
</dbReference>
<dbReference type="RefSeq" id="NP_043440.1">
    <property type="nucleotide sequence ID" value="NC_001693.1"/>
</dbReference>
<dbReference type="SMR" id="Q80944"/>
<dbReference type="GeneID" id="1403641"/>
<dbReference type="KEGG" id="vg:1403641"/>
<dbReference type="OrthoDB" id="15886at10239"/>
<dbReference type="Proteomes" id="UP000120507">
    <property type="component" value="Genome"/>
</dbReference>
<dbReference type="GO" id="GO:0042025">
    <property type="term" value="C:host cell nucleus"/>
    <property type="evidence" value="ECO:0007669"/>
    <property type="project" value="UniProtKB-SubCell"/>
</dbReference>
<dbReference type="GO" id="GO:0003677">
    <property type="term" value="F:DNA binding"/>
    <property type="evidence" value="ECO:0007669"/>
    <property type="project" value="UniProtKB-UniRule"/>
</dbReference>
<dbReference type="GO" id="GO:0003700">
    <property type="term" value="F:DNA-binding transcription factor activity"/>
    <property type="evidence" value="ECO:0007669"/>
    <property type="project" value="UniProtKB-UniRule"/>
</dbReference>
<dbReference type="GO" id="GO:0000166">
    <property type="term" value="F:nucleotide binding"/>
    <property type="evidence" value="ECO:0007669"/>
    <property type="project" value="UniProtKB-UniRule"/>
</dbReference>
<dbReference type="GO" id="GO:0006260">
    <property type="term" value="P:DNA replication"/>
    <property type="evidence" value="ECO:0007669"/>
    <property type="project" value="UniProtKB-KW"/>
</dbReference>
<dbReference type="GO" id="GO:0006351">
    <property type="term" value="P:DNA-templated transcription"/>
    <property type="evidence" value="ECO:0007669"/>
    <property type="project" value="UniProtKB-UniRule"/>
</dbReference>
<dbReference type="GO" id="GO:0006275">
    <property type="term" value="P:regulation of DNA replication"/>
    <property type="evidence" value="ECO:0007669"/>
    <property type="project" value="UniProtKB-UniRule"/>
</dbReference>
<dbReference type="GO" id="GO:0039693">
    <property type="term" value="P:viral DNA genome replication"/>
    <property type="evidence" value="ECO:0007669"/>
    <property type="project" value="UniProtKB-UniRule"/>
</dbReference>
<dbReference type="Gene3D" id="3.30.70.330">
    <property type="match status" value="1"/>
</dbReference>
<dbReference type="Gene3D" id="1.10.287.30">
    <property type="entry name" value="E2 (early) protein, N terminal domain, subdomain 1"/>
    <property type="match status" value="1"/>
</dbReference>
<dbReference type="Gene3D" id="2.170.200.10">
    <property type="entry name" value="Papillomavirus E2 early protein domain"/>
    <property type="match status" value="1"/>
</dbReference>
<dbReference type="HAMAP" id="MF_04001">
    <property type="entry name" value="PPV_E2"/>
    <property type="match status" value="1"/>
</dbReference>
<dbReference type="InterPro" id="IPR035975">
    <property type="entry name" value="E2/EBNA1_C_sf"/>
</dbReference>
<dbReference type="InterPro" id="IPR012677">
    <property type="entry name" value="Nucleotide-bd_a/b_plait_sf"/>
</dbReference>
<dbReference type="InterPro" id="IPR000427">
    <property type="entry name" value="Papillomavirus_E2_C"/>
</dbReference>
<dbReference type="InterPro" id="IPR001866">
    <property type="entry name" value="PPV_E2_N"/>
</dbReference>
<dbReference type="InterPro" id="IPR033668">
    <property type="entry name" value="Reg_prot_E2"/>
</dbReference>
<dbReference type="InterPro" id="IPR036050">
    <property type="entry name" value="Regulatory_protein_E2_N"/>
</dbReference>
<dbReference type="InterPro" id="IPR042503">
    <property type="entry name" value="Regulatory_protein_E2_N_1"/>
</dbReference>
<dbReference type="InterPro" id="IPR042504">
    <property type="entry name" value="Regulatory_protein_E2_N_2"/>
</dbReference>
<dbReference type="Pfam" id="PF00511">
    <property type="entry name" value="PPV_E2_C"/>
    <property type="match status" value="1"/>
</dbReference>
<dbReference type="Pfam" id="PF00508">
    <property type="entry name" value="PPV_E2_N"/>
    <property type="match status" value="1"/>
</dbReference>
<dbReference type="SUPFAM" id="SSF51332">
    <property type="entry name" value="E2 regulatory, transactivation domain"/>
    <property type="match status" value="1"/>
</dbReference>
<dbReference type="SUPFAM" id="SSF54957">
    <property type="entry name" value="Viral DNA-binding domain"/>
    <property type="match status" value="1"/>
</dbReference>
<protein>
    <recommendedName>
        <fullName evidence="1">Regulatory protein E2</fullName>
    </recommendedName>
</protein>
<gene>
    <name evidence="1" type="primary">E2</name>
</gene>
<evidence type="ECO:0000255" key="1">
    <source>
        <dbReference type="HAMAP-Rule" id="MF_04001"/>
    </source>
</evidence>
<evidence type="ECO:0000256" key="2">
    <source>
        <dbReference type="SAM" id="MobiDB-lite"/>
    </source>
</evidence>
<keyword id="KW-0010">Activator</keyword>
<keyword id="KW-0235">DNA replication</keyword>
<keyword id="KW-0238">DNA-binding</keyword>
<keyword id="KW-0244">Early protein</keyword>
<keyword id="KW-1048">Host nucleus</keyword>
<keyword id="KW-1017">Isopeptide bond</keyword>
<keyword id="KW-0597">Phosphoprotein</keyword>
<keyword id="KW-1185">Reference proteome</keyword>
<keyword id="KW-0678">Repressor</keyword>
<keyword id="KW-0804">Transcription</keyword>
<keyword id="KW-0805">Transcription regulation</keyword>
<keyword id="KW-0832">Ubl conjugation</keyword>
<feature type="chain" id="PRO_0000133237" description="Regulatory protein E2">
    <location>
        <begin position="1"/>
        <end position="404"/>
    </location>
</feature>
<feature type="region of interest" description="Transactivation domain" evidence="1">
    <location>
        <begin position="1"/>
        <end position="204"/>
    </location>
</feature>
<feature type="region of interest" description="Disordered" evidence="2">
    <location>
        <begin position="201"/>
        <end position="306"/>
    </location>
</feature>
<feature type="region of interest" description="DNA-binding domain" evidence="1">
    <location>
        <begin position="322"/>
        <end position="404"/>
    </location>
</feature>
<feature type="compositionally biased region" description="Polar residues" evidence="2">
    <location>
        <begin position="224"/>
        <end position="250"/>
    </location>
</feature>
<feature type="compositionally biased region" description="Basic and acidic residues" evidence="2">
    <location>
        <begin position="259"/>
        <end position="285"/>
    </location>
</feature>
<feature type="cross-link" description="Glycyl lysine isopeptide (Lys-Gly) (interchain with G-Cter in SUMO)" evidence="1">
    <location>
        <position position="329"/>
    </location>
</feature>
<comment type="function">
    <text evidence="1">Plays a role in the initiation of viral DNA replication. A dimer of E2 interacts with a dimer of E1 in order to improve specificity of E1 DNA binding activity. Once the complex recognizes and binds DNA at specific sites, the E2 dimer is removed from DNA. E2 also regulates viral transcription through binding to the E2RE response element (5'-ACCNNNNNNGGT-3') present in multiple copies in the regulatory regions of the viral genome. Activates or represses transcription depending on E2RE's position with regards to proximal promoter elements including the TATA-box. Repression occurs by sterically hindering the assembly of the transcription initiation complex.</text>
</comment>
<comment type="subunit">
    <text evidence="1">Binds DNA as homodimer. Interacts with protein E1; this interaction greatly increases E1 DNA-binding activity. Interacts with protein L1; this interaction enhances E2-dependent replication and transcription activation. Interacts with protein L2; this interaction inhibits E2 transcriptional activity but not DNA replication function E2. Interacts with protein E7; this interaction inhibits E7 oncogenic activity. Interacts with host TAF1; this interaction modulates E2-dependent transcriptional regulation. Interacts with host BRD4; this interaction mediates E2 transcriptional activation function. Additionally, the interaction with host BRD4 on mitotic chromosomes mediates tethering of the viral genome. Interacts with host TOPBP1; this interaction is required for optimal viral DNA replication.</text>
</comment>
<comment type="subcellular location">
    <subcellularLocation>
        <location evidence="1">Host nucleus</location>
    </subcellularLocation>
</comment>
<comment type="PTM">
    <text evidence="1">Phosphorylated.</text>
</comment>
<comment type="PTM">
    <text evidence="1">Sumoylation plays a regulatory role in E2 transcriptional activity.</text>
</comment>
<comment type="similarity">
    <text evidence="1">Belongs to the papillomaviridae E2 protein family.</text>
</comment>
<reference key="1">
    <citation type="submission" date="1995-10" db="EMBL/GenBank/DDBJ databases">
        <authorList>
            <person name="Delius H."/>
        </authorList>
    </citation>
    <scope>NUCLEOTIDE SEQUENCE [GENOMIC DNA]</scope>
</reference>